<name>AF1Q_DANRE</name>
<dbReference type="EMBL" id="BX927401">
    <property type="protein sequence ID" value="CAM56382.1"/>
    <property type="molecule type" value="Genomic_DNA"/>
</dbReference>
<dbReference type="RefSeq" id="NP_001153456.1">
    <property type="nucleotide sequence ID" value="NM_001159984.2"/>
</dbReference>
<dbReference type="FunCoup" id="A3KQS5">
    <property type="interactions" value="1072"/>
</dbReference>
<dbReference type="PaxDb" id="7955-ENSDARP00000095520"/>
<dbReference type="Ensembl" id="ENSDART00000104750">
    <property type="protein sequence ID" value="ENSDARP00000095520"/>
    <property type="gene ID" value="ENSDARG00000071026"/>
</dbReference>
<dbReference type="GeneID" id="563531"/>
<dbReference type="KEGG" id="dre:563531"/>
<dbReference type="AGR" id="ZFIN:ZDB-GENE-030131-3007"/>
<dbReference type="CTD" id="10962"/>
<dbReference type="ZFIN" id="ZDB-GENE-030131-3007">
    <property type="gene designation" value="mllt11"/>
</dbReference>
<dbReference type="eggNOG" id="ENOG502S7MB">
    <property type="taxonomic scope" value="Eukaryota"/>
</dbReference>
<dbReference type="HOGENOM" id="CLU_2440320_0_0_1"/>
<dbReference type="InParanoid" id="A3KQS5"/>
<dbReference type="OMA" id="RISPVDF"/>
<dbReference type="OrthoDB" id="9991950at2759"/>
<dbReference type="PhylomeDB" id="A3KQS5"/>
<dbReference type="TreeFam" id="TF336906"/>
<dbReference type="PRO" id="PR:A3KQS5"/>
<dbReference type="Proteomes" id="UP000000437">
    <property type="component" value="Chromosome 19"/>
</dbReference>
<dbReference type="Bgee" id="ENSDARG00000071026">
    <property type="expression patterns" value="Expressed in muscle tissue and 22 other cell types or tissues"/>
</dbReference>
<dbReference type="GO" id="GO:0005813">
    <property type="term" value="C:centrosome"/>
    <property type="evidence" value="ECO:0007669"/>
    <property type="project" value="UniProtKB-SubCell"/>
</dbReference>
<dbReference type="GO" id="GO:0005829">
    <property type="term" value="C:cytosol"/>
    <property type="evidence" value="ECO:0000318"/>
    <property type="project" value="GO_Central"/>
</dbReference>
<dbReference type="GO" id="GO:0005654">
    <property type="term" value="C:nucleoplasm"/>
    <property type="evidence" value="ECO:0000318"/>
    <property type="project" value="GO_Central"/>
</dbReference>
<dbReference type="GO" id="GO:0097190">
    <property type="term" value="P:apoptotic signaling pathway"/>
    <property type="evidence" value="ECO:0007669"/>
    <property type="project" value="InterPro"/>
</dbReference>
<dbReference type="GO" id="GO:0045893">
    <property type="term" value="P:positive regulation of DNA-templated transcription"/>
    <property type="evidence" value="ECO:0000318"/>
    <property type="project" value="GO_Central"/>
</dbReference>
<dbReference type="GO" id="GO:0051901">
    <property type="term" value="P:positive regulation of mitochondrial depolarization"/>
    <property type="evidence" value="ECO:0000318"/>
    <property type="project" value="GO_Central"/>
</dbReference>
<dbReference type="GO" id="GO:0090200">
    <property type="term" value="P:positive regulation of release of cytochrome c from mitochondria"/>
    <property type="evidence" value="ECO:0000318"/>
    <property type="project" value="GO_Central"/>
</dbReference>
<dbReference type="InterPro" id="IPR026778">
    <property type="entry name" value="MLLT11_fam"/>
</dbReference>
<dbReference type="InterPro" id="IPR033461">
    <property type="entry name" value="WRNPLPNID"/>
</dbReference>
<dbReference type="PANTHER" id="PTHR15404">
    <property type="entry name" value="PROTEIN AF1Q"/>
    <property type="match status" value="1"/>
</dbReference>
<dbReference type="PANTHER" id="PTHR15404:SF2">
    <property type="entry name" value="PROTEIN AF1Q"/>
    <property type="match status" value="1"/>
</dbReference>
<dbReference type="Pfam" id="PF15017">
    <property type="entry name" value="WRNPLPNID"/>
    <property type="match status" value="1"/>
</dbReference>
<feature type="chain" id="PRO_0000293475" description="Protein AF1q">
    <location>
        <begin position="1"/>
        <end position="82"/>
    </location>
</feature>
<feature type="short sequence motif" description="Nuclear export signal" evidence="1">
    <location>
        <begin position="24"/>
        <end position="32"/>
    </location>
</feature>
<reference key="1">
    <citation type="journal article" date="2013" name="Nature">
        <title>The zebrafish reference genome sequence and its relationship to the human genome.</title>
        <authorList>
            <person name="Howe K."/>
            <person name="Clark M.D."/>
            <person name="Torroja C.F."/>
            <person name="Torrance J."/>
            <person name="Berthelot C."/>
            <person name="Muffato M."/>
            <person name="Collins J.E."/>
            <person name="Humphray S."/>
            <person name="McLaren K."/>
            <person name="Matthews L."/>
            <person name="McLaren S."/>
            <person name="Sealy I."/>
            <person name="Caccamo M."/>
            <person name="Churcher C."/>
            <person name="Scott C."/>
            <person name="Barrett J.C."/>
            <person name="Koch R."/>
            <person name="Rauch G.J."/>
            <person name="White S."/>
            <person name="Chow W."/>
            <person name="Kilian B."/>
            <person name="Quintais L.T."/>
            <person name="Guerra-Assuncao J.A."/>
            <person name="Zhou Y."/>
            <person name="Gu Y."/>
            <person name="Yen J."/>
            <person name="Vogel J.H."/>
            <person name="Eyre T."/>
            <person name="Redmond S."/>
            <person name="Banerjee R."/>
            <person name="Chi J."/>
            <person name="Fu B."/>
            <person name="Langley E."/>
            <person name="Maguire S.F."/>
            <person name="Laird G.K."/>
            <person name="Lloyd D."/>
            <person name="Kenyon E."/>
            <person name="Donaldson S."/>
            <person name="Sehra H."/>
            <person name="Almeida-King J."/>
            <person name="Loveland J."/>
            <person name="Trevanion S."/>
            <person name="Jones M."/>
            <person name="Quail M."/>
            <person name="Willey D."/>
            <person name="Hunt A."/>
            <person name="Burton J."/>
            <person name="Sims S."/>
            <person name="McLay K."/>
            <person name="Plumb B."/>
            <person name="Davis J."/>
            <person name="Clee C."/>
            <person name="Oliver K."/>
            <person name="Clark R."/>
            <person name="Riddle C."/>
            <person name="Elliot D."/>
            <person name="Threadgold G."/>
            <person name="Harden G."/>
            <person name="Ware D."/>
            <person name="Begum S."/>
            <person name="Mortimore B."/>
            <person name="Kerry G."/>
            <person name="Heath P."/>
            <person name="Phillimore B."/>
            <person name="Tracey A."/>
            <person name="Corby N."/>
            <person name="Dunn M."/>
            <person name="Johnson C."/>
            <person name="Wood J."/>
            <person name="Clark S."/>
            <person name="Pelan S."/>
            <person name="Griffiths G."/>
            <person name="Smith M."/>
            <person name="Glithero R."/>
            <person name="Howden P."/>
            <person name="Barker N."/>
            <person name="Lloyd C."/>
            <person name="Stevens C."/>
            <person name="Harley J."/>
            <person name="Holt K."/>
            <person name="Panagiotidis G."/>
            <person name="Lovell J."/>
            <person name="Beasley H."/>
            <person name="Henderson C."/>
            <person name="Gordon D."/>
            <person name="Auger K."/>
            <person name="Wright D."/>
            <person name="Collins J."/>
            <person name="Raisen C."/>
            <person name="Dyer L."/>
            <person name="Leung K."/>
            <person name="Robertson L."/>
            <person name="Ambridge K."/>
            <person name="Leongamornlert D."/>
            <person name="McGuire S."/>
            <person name="Gilderthorp R."/>
            <person name="Griffiths C."/>
            <person name="Manthravadi D."/>
            <person name="Nichol S."/>
            <person name="Barker G."/>
            <person name="Whitehead S."/>
            <person name="Kay M."/>
            <person name="Brown J."/>
            <person name="Murnane C."/>
            <person name="Gray E."/>
            <person name="Humphries M."/>
            <person name="Sycamore N."/>
            <person name="Barker D."/>
            <person name="Saunders D."/>
            <person name="Wallis J."/>
            <person name="Babbage A."/>
            <person name="Hammond S."/>
            <person name="Mashreghi-Mohammadi M."/>
            <person name="Barr L."/>
            <person name="Martin S."/>
            <person name="Wray P."/>
            <person name="Ellington A."/>
            <person name="Matthews N."/>
            <person name="Ellwood M."/>
            <person name="Woodmansey R."/>
            <person name="Clark G."/>
            <person name="Cooper J."/>
            <person name="Tromans A."/>
            <person name="Grafham D."/>
            <person name="Skuce C."/>
            <person name="Pandian R."/>
            <person name="Andrews R."/>
            <person name="Harrison E."/>
            <person name="Kimberley A."/>
            <person name="Garnett J."/>
            <person name="Fosker N."/>
            <person name="Hall R."/>
            <person name="Garner P."/>
            <person name="Kelly D."/>
            <person name="Bird C."/>
            <person name="Palmer S."/>
            <person name="Gehring I."/>
            <person name="Berger A."/>
            <person name="Dooley C.M."/>
            <person name="Ersan-Urun Z."/>
            <person name="Eser C."/>
            <person name="Geiger H."/>
            <person name="Geisler M."/>
            <person name="Karotki L."/>
            <person name="Kirn A."/>
            <person name="Konantz J."/>
            <person name="Konantz M."/>
            <person name="Oberlander M."/>
            <person name="Rudolph-Geiger S."/>
            <person name="Teucke M."/>
            <person name="Lanz C."/>
            <person name="Raddatz G."/>
            <person name="Osoegawa K."/>
            <person name="Zhu B."/>
            <person name="Rapp A."/>
            <person name="Widaa S."/>
            <person name="Langford C."/>
            <person name="Yang F."/>
            <person name="Schuster S.C."/>
            <person name="Carter N.P."/>
            <person name="Harrow J."/>
            <person name="Ning Z."/>
            <person name="Herrero J."/>
            <person name="Searle S.M."/>
            <person name="Enright A."/>
            <person name="Geisler R."/>
            <person name="Plasterk R.H."/>
            <person name="Lee C."/>
            <person name="Westerfield M."/>
            <person name="de Jong P.J."/>
            <person name="Zon L.I."/>
            <person name="Postlethwait J.H."/>
            <person name="Nusslein-Volhard C."/>
            <person name="Hubbard T.J."/>
            <person name="Roest Crollius H."/>
            <person name="Rogers J."/>
            <person name="Stemple D.L."/>
        </authorList>
    </citation>
    <scope>NUCLEOTIDE SEQUENCE [LARGE SCALE GENOMIC DNA]</scope>
    <source>
        <strain>Tuebingen</strain>
    </source>
</reference>
<comment type="function">
    <text evidence="1">Cofactor for the transcription factor TCF7. May be involved in lymphoid development.</text>
</comment>
<comment type="subcellular location">
    <subcellularLocation>
        <location evidence="1">Nucleus</location>
    </subcellularLocation>
    <subcellularLocation>
        <location evidence="1">Cytoplasm</location>
    </subcellularLocation>
    <subcellularLocation>
        <location evidence="1">Cytoplasm</location>
        <location evidence="1">Cytoskeleton</location>
        <location evidence="1">Microtubule organizing center</location>
        <location evidence="1">Centrosome</location>
    </subcellularLocation>
    <text evidence="1">Continuous nuclear export is followed by degradation.</text>
</comment>
<comment type="PTM">
    <text evidence="1">Ubiquitinated, leading to degradation.</text>
</comment>
<comment type="similarity">
    <text evidence="2">Belongs to the MLLT11 family.</text>
</comment>
<sequence length="82" mass="9579">MLDKTSSQFDSFLFWRQPIPSLDLSELEDLGISAPKSKEMKSTKSFPRQDEDEDRELSKFSTFNFWKEPIPSIDTLDFSLLL</sequence>
<accession>A3KQS5</accession>
<protein>
    <recommendedName>
        <fullName>Protein AF1q</fullName>
    </recommendedName>
</protein>
<keyword id="KW-0963">Cytoplasm</keyword>
<keyword id="KW-0206">Cytoskeleton</keyword>
<keyword id="KW-0539">Nucleus</keyword>
<keyword id="KW-1185">Reference proteome</keyword>
<keyword id="KW-0832">Ubl conjugation</keyword>
<gene>
    <name type="primary">mllt11</name>
    <name type="synonym">af1q</name>
    <name type="ORF">si:ch211-210h11.4</name>
</gene>
<proteinExistence type="inferred from homology"/>
<organism>
    <name type="scientific">Danio rerio</name>
    <name type="common">Zebrafish</name>
    <name type="synonym">Brachydanio rerio</name>
    <dbReference type="NCBI Taxonomy" id="7955"/>
    <lineage>
        <taxon>Eukaryota</taxon>
        <taxon>Metazoa</taxon>
        <taxon>Chordata</taxon>
        <taxon>Craniata</taxon>
        <taxon>Vertebrata</taxon>
        <taxon>Euteleostomi</taxon>
        <taxon>Actinopterygii</taxon>
        <taxon>Neopterygii</taxon>
        <taxon>Teleostei</taxon>
        <taxon>Ostariophysi</taxon>
        <taxon>Cypriniformes</taxon>
        <taxon>Danionidae</taxon>
        <taxon>Danioninae</taxon>
        <taxon>Danio</taxon>
    </lineage>
</organism>
<evidence type="ECO:0000250" key="1">
    <source>
        <dbReference type="UniProtKB" id="Q13015"/>
    </source>
</evidence>
<evidence type="ECO:0000305" key="2"/>